<name>GRIH_STRGR</name>
<dbReference type="EC" id="4.1.99.20" evidence="2"/>
<dbReference type="EMBL" id="AB259663">
    <property type="protein sequence ID" value="BAF36650.1"/>
    <property type="molecule type" value="Genomic_DNA"/>
</dbReference>
<dbReference type="OMA" id="HFGMAIK"/>
<dbReference type="OrthoDB" id="2043123at2"/>
<dbReference type="BioCyc" id="MetaCyc:MONOMER-17798"/>
<dbReference type="BRENDA" id="4.1.99.20">
    <property type="organism ID" value="6035"/>
</dbReference>
<dbReference type="SABIO-RK" id="A0JC76"/>
<dbReference type="GO" id="GO:0003856">
    <property type="term" value="F:3-dehydroquinate synthase activity"/>
    <property type="evidence" value="ECO:0007669"/>
    <property type="project" value="InterPro"/>
</dbReference>
<dbReference type="GO" id="GO:0016491">
    <property type="term" value="F:oxidoreductase activity"/>
    <property type="evidence" value="ECO:0007669"/>
    <property type="project" value="InterPro"/>
</dbReference>
<dbReference type="GO" id="GO:0008652">
    <property type="term" value="P:amino acid biosynthetic process"/>
    <property type="evidence" value="ECO:0007669"/>
    <property type="project" value="UniProtKB-KW"/>
</dbReference>
<dbReference type="GO" id="GO:0009073">
    <property type="term" value="P:aromatic amino acid family biosynthetic process"/>
    <property type="evidence" value="ECO:0007669"/>
    <property type="project" value="UniProtKB-KW"/>
</dbReference>
<dbReference type="InterPro" id="IPR002812">
    <property type="entry name" value="DHQ_synth"/>
</dbReference>
<dbReference type="NCBIfam" id="NF002625">
    <property type="entry name" value="PRK02290.1-3"/>
    <property type="match status" value="1"/>
</dbReference>
<dbReference type="PANTHER" id="PTHR33563">
    <property type="match status" value="1"/>
</dbReference>
<dbReference type="PANTHER" id="PTHR33563:SF1">
    <property type="entry name" value="3-DEHYDROQUINATE SYNTHASE"/>
    <property type="match status" value="1"/>
</dbReference>
<dbReference type="Pfam" id="PF01959">
    <property type="entry name" value="DHQS"/>
    <property type="match status" value="1"/>
</dbReference>
<organism>
    <name type="scientific">Streptomyces griseus</name>
    <dbReference type="NCBI Taxonomy" id="1911"/>
    <lineage>
        <taxon>Bacteria</taxon>
        <taxon>Bacillati</taxon>
        <taxon>Actinomycetota</taxon>
        <taxon>Actinomycetes</taxon>
        <taxon>Kitasatosporales</taxon>
        <taxon>Streptomycetaceae</taxon>
        <taxon>Streptomyces</taxon>
    </lineage>
</organism>
<proteinExistence type="evidence at protein level"/>
<sequence length="396" mass="42438">MSSSPSPSPSSSSSSSASSSASSSPSSSSKLTWLDIRSVGEARAAIVQEALHHRVEALVADDPAHLADLPPTVAKVLLVVGKQIPEEFGEATVVVVDPSKHGVTPAELALKHPEIEFGRFVEIIDAPTLEDACESSRTEKWSVLLFRDPTKIPLEIVIAAAARASGSMVTIAQDLEEAEILFGVLEHGSDGVMMAPKTVGDAAELKRIAEAGIPNLNLTELRVVETSHIGMGERACVDTTTHFGEDEGILVGSHSKGMILCVSETHPLPYMPTRPFRVNAGAIHSYTLGRDERTNYLSELKTGSKLTAVDIKGNTRLVTVGRVKIETRPLISIDAEAPDGRRVNLILQDDWHVRVLGPGGTVLNSTELKPGDTVLGYLPVEDRHVGYPINEFCLEK</sequence>
<comment type="function">
    <text evidence="2">Catalyzes the cyclization of 2-amino-4,5-dihydroxy-6-one-heptanoic acid-7-phosphate to yield 3-amino-4-hydroxybenzoic acid (3,4-AHBA).</text>
</comment>
<comment type="catalytic activity">
    <reaction evidence="2">
        <text>2-amino-4,5-dihydroxy-6-oxo-7-(phosphooxy)heptanoate = 3-amino-4-hydroxybenzoate + phosphate + 2 H2O + H(+)</text>
        <dbReference type="Rhea" id="RHEA:26317"/>
        <dbReference type="ChEBI" id="CHEBI:15377"/>
        <dbReference type="ChEBI" id="CHEBI:15378"/>
        <dbReference type="ChEBI" id="CHEBI:43474"/>
        <dbReference type="ChEBI" id="CHEBI:58898"/>
        <dbReference type="ChEBI" id="CHEBI:60005"/>
        <dbReference type="EC" id="4.1.99.20"/>
    </reaction>
</comment>
<comment type="cofactor">
    <cofactor evidence="2">
        <name>Mn(2+)</name>
        <dbReference type="ChEBI" id="CHEBI:29035"/>
    </cofactor>
    <cofactor evidence="2">
        <name>Co(2+)</name>
        <dbReference type="ChEBI" id="CHEBI:48828"/>
    </cofactor>
    <cofactor evidence="2">
        <name>Fe(2+)</name>
        <dbReference type="ChEBI" id="CHEBI:29033"/>
    </cofactor>
    <cofactor evidence="2">
        <name>Mg(2+)</name>
        <dbReference type="ChEBI" id="CHEBI:18420"/>
    </cofactor>
    <text evidence="2">Manganese. Cobalt, iron and magnesium can be used to a lesser extent.</text>
</comment>
<comment type="activity regulation">
    <text evidence="2">Partially inhibited by 0.1 mM pyridoxal phosphate.</text>
</comment>
<comment type="biophysicochemical properties">
    <kinetics>
        <KM evidence="2">12 uM for 2-amino-4,5-dihydroxy-6-one-heptanoic acid-7-phosphate (at 30 degrees Celsius)</KM>
        <text>This Km value might be underestimated because the concentration of the substrate determined is perhaps lower than the actual concentration due to the instability of the substrate compound.</text>
    </kinetics>
    <phDependence>
        <text evidence="2">Optimum pH is 6.5-10.5.</text>
    </phDependence>
    <temperatureDependence>
        <text evidence="2">Optimum temperature is 30 degrees Celsius.</text>
    </temperatureDependence>
</comment>
<comment type="subunit">
    <text evidence="2">Monomer.</text>
</comment>
<comment type="similarity">
    <text evidence="3">Belongs to the archaeal-type DHQ synthase family. GriH subfamily.</text>
</comment>
<accession>A0JC76</accession>
<gene>
    <name type="primary">griH</name>
</gene>
<protein>
    <recommendedName>
        <fullName>3-amino-4-hydroxybenzoic acid synthase</fullName>
        <shortName>3,4-AHBA synthase</shortName>
        <ecNumber evidence="2">4.1.99.20</ecNumber>
    </recommendedName>
</protein>
<reference key="1">
    <citation type="journal article" date="2006" name="J. Biol. Chem.">
        <title>Novel benzene ring biosynthesis from C(3) and C(4) primary metabolites by two enzymes.</title>
        <authorList>
            <person name="Suzuki H."/>
            <person name="Ohnishi Y."/>
            <person name="Furusho Y."/>
            <person name="Sakuda S."/>
            <person name="Horinouchi S."/>
        </authorList>
    </citation>
    <scope>NUCLEOTIDE SEQUENCE [GENOMIC DNA]</scope>
    <scope>FUNCTION</scope>
    <scope>CATALYTIC ACTIVITY</scope>
    <scope>BIOPHYSICOCHEMICAL PROPERTIES</scope>
    <scope>SUBUNIT</scope>
    <scope>ACTIVITY REGULATION</scope>
    <scope>COFACTOR</scope>
    <source>
        <strain>IFO 13350</strain>
    </source>
</reference>
<keyword id="KW-0028">Amino-acid biosynthesis</keyword>
<keyword id="KW-0057">Aromatic amino acid biosynthesis</keyword>
<keyword id="KW-0456">Lyase</keyword>
<keyword id="KW-0464">Manganese</keyword>
<feature type="chain" id="PRO_0000361907" description="3-amino-4-hydroxybenzoic acid synthase">
    <location>
        <begin position="1"/>
        <end position="396"/>
    </location>
</feature>
<feature type="region of interest" description="Disordered" evidence="1">
    <location>
        <begin position="1"/>
        <end position="29"/>
    </location>
</feature>
<evidence type="ECO:0000256" key="1">
    <source>
        <dbReference type="SAM" id="MobiDB-lite"/>
    </source>
</evidence>
<evidence type="ECO:0000269" key="2">
    <source>
    </source>
</evidence>
<evidence type="ECO:0000305" key="3"/>